<feature type="chain" id="PRO_1000100304" description="CinA-like protein">
    <location>
        <begin position="1"/>
        <end position="416"/>
    </location>
</feature>
<accession>B3ER86</accession>
<evidence type="ECO:0000255" key="1">
    <source>
        <dbReference type="HAMAP-Rule" id="MF_00226"/>
    </source>
</evidence>
<gene>
    <name type="ordered locus">Aasi_0301</name>
</gene>
<name>CINAL_AMOA5</name>
<comment type="similarity">
    <text evidence="1">Belongs to the CinA family.</text>
</comment>
<organism>
    <name type="scientific">Amoebophilus asiaticus (strain 5a2)</name>
    <dbReference type="NCBI Taxonomy" id="452471"/>
    <lineage>
        <taxon>Bacteria</taxon>
        <taxon>Pseudomonadati</taxon>
        <taxon>Bacteroidota</taxon>
        <taxon>Cytophagia</taxon>
        <taxon>Cytophagales</taxon>
        <taxon>Amoebophilaceae</taxon>
        <taxon>Candidatus Amoebophilus</taxon>
    </lineage>
</organism>
<dbReference type="EMBL" id="CP001102">
    <property type="protein sequence ID" value="ACE05738.1"/>
    <property type="molecule type" value="Genomic_DNA"/>
</dbReference>
<dbReference type="RefSeq" id="WP_012472501.1">
    <property type="nucleotide sequence ID" value="NC_010830.1"/>
</dbReference>
<dbReference type="SMR" id="B3ER86"/>
<dbReference type="STRING" id="452471.Aasi_0301"/>
<dbReference type="KEGG" id="aas:Aasi_0301"/>
<dbReference type="eggNOG" id="COG1058">
    <property type="taxonomic scope" value="Bacteria"/>
</dbReference>
<dbReference type="eggNOG" id="COG1546">
    <property type="taxonomic scope" value="Bacteria"/>
</dbReference>
<dbReference type="HOGENOM" id="CLU_030805_9_2_10"/>
<dbReference type="OrthoDB" id="9801454at2"/>
<dbReference type="Proteomes" id="UP000001227">
    <property type="component" value="Chromosome"/>
</dbReference>
<dbReference type="CDD" id="cd00885">
    <property type="entry name" value="cinA"/>
    <property type="match status" value="1"/>
</dbReference>
<dbReference type="Gene3D" id="3.90.950.20">
    <property type="entry name" value="CinA-like"/>
    <property type="match status" value="1"/>
</dbReference>
<dbReference type="Gene3D" id="3.40.980.10">
    <property type="entry name" value="MoaB/Mog-like domain"/>
    <property type="match status" value="1"/>
</dbReference>
<dbReference type="HAMAP" id="MF_00226_B">
    <property type="entry name" value="CinA_B"/>
    <property type="match status" value="1"/>
</dbReference>
<dbReference type="InterPro" id="IPR050101">
    <property type="entry name" value="CinA"/>
</dbReference>
<dbReference type="InterPro" id="IPR036653">
    <property type="entry name" value="CinA-like_C"/>
</dbReference>
<dbReference type="InterPro" id="IPR008136">
    <property type="entry name" value="CinA_C"/>
</dbReference>
<dbReference type="InterPro" id="IPR008135">
    <property type="entry name" value="Competence-induced_CinA"/>
</dbReference>
<dbReference type="InterPro" id="IPR036425">
    <property type="entry name" value="MoaB/Mog-like_dom_sf"/>
</dbReference>
<dbReference type="InterPro" id="IPR001453">
    <property type="entry name" value="MoaB/Mog_dom"/>
</dbReference>
<dbReference type="NCBIfam" id="TIGR00200">
    <property type="entry name" value="cinA_nterm"/>
    <property type="match status" value="1"/>
</dbReference>
<dbReference type="NCBIfam" id="TIGR00177">
    <property type="entry name" value="molyb_syn"/>
    <property type="match status" value="1"/>
</dbReference>
<dbReference type="NCBIfam" id="TIGR00199">
    <property type="entry name" value="PncC_domain"/>
    <property type="match status" value="1"/>
</dbReference>
<dbReference type="PANTHER" id="PTHR13939">
    <property type="entry name" value="NICOTINAMIDE-NUCLEOTIDE AMIDOHYDROLASE PNCC"/>
    <property type="match status" value="1"/>
</dbReference>
<dbReference type="PANTHER" id="PTHR13939:SF0">
    <property type="entry name" value="NMN AMIDOHYDROLASE-LIKE PROTEIN YFAY"/>
    <property type="match status" value="1"/>
</dbReference>
<dbReference type="Pfam" id="PF02464">
    <property type="entry name" value="CinA"/>
    <property type="match status" value="1"/>
</dbReference>
<dbReference type="Pfam" id="PF00994">
    <property type="entry name" value="MoCF_biosynth"/>
    <property type="match status" value="1"/>
</dbReference>
<dbReference type="PIRSF" id="PIRSF006728">
    <property type="entry name" value="CinA"/>
    <property type="match status" value="1"/>
</dbReference>
<dbReference type="SMART" id="SM00852">
    <property type="entry name" value="MoCF_biosynth"/>
    <property type="match status" value="1"/>
</dbReference>
<dbReference type="SUPFAM" id="SSF142433">
    <property type="entry name" value="CinA-like"/>
    <property type="match status" value="1"/>
</dbReference>
<dbReference type="SUPFAM" id="SSF53218">
    <property type="entry name" value="Molybdenum cofactor biosynthesis proteins"/>
    <property type="match status" value="1"/>
</dbReference>
<reference key="1">
    <citation type="journal article" date="2010" name="J. Bacteriol.">
        <title>The genome of the amoeba symbiont 'Candidatus Amoebophilus asiaticus' reveals common mechanisms for host cell interaction among amoeba-associated bacteria.</title>
        <authorList>
            <person name="Schmitz-Esser S."/>
            <person name="Tischler P."/>
            <person name="Arnold R."/>
            <person name="Montanaro J."/>
            <person name="Wagner M."/>
            <person name="Rattei T."/>
            <person name="Horn M."/>
        </authorList>
    </citation>
    <scope>NUCLEOTIDE SEQUENCE [LARGE SCALE GENOMIC DNA]</scope>
    <source>
        <strain>5a2</strain>
    </source>
</reference>
<protein>
    <recommendedName>
        <fullName evidence="1">CinA-like protein</fullName>
    </recommendedName>
</protein>
<proteinExistence type="inferred from homology"/>
<keyword id="KW-1185">Reference proteome</keyword>
<sequence length="416" mass="45364">MRTEIISIGNELLQGQILDSNAQHISTALSQIGLKVMQITVLPDEIEAIVEALAATKQRSCKIVITTGGLGPTSDDVTKEALAKYLDCPAVVFSKERLSNLGGVDTPVIQYLERATNSSVNISDLQLGGIKNVLGTAPGIYCKQNNQILIVLPGVPTEMQAMLRDTVLPYLQSNFTLPIFYQKTICTIGISEEEIAAILAPWESRLPAPIKLAYLPDLATVKITLAATVPTWEESKRLVEEEFLRVLPLIEPYVYGYNTDTIEEVISRLLKSQKNSLSVAESCTGGYVSQLITQVPGSSVYYQGGIVAYNNTAKHKILGVARNTLLQYGAVSQETAMEMARNVRLKLKANIGLATTGIAGPGGGTIEHPVGTIWIAYADENTCYAQKLQLTNNRLYNIQLTAYHLLDLLRKKLQGK</sequence>